<accession>A6TH65</accession>
<dbReference type="EMBL" id="CP000647">
    <property type="protein sequence ID" value="ABR79899.1"/>
    <property type="molecule type" value="Genomic_DNA"/>
</dbReference>
<dbReference type="RefSeq" id="WP_002885506.1">
    <property type="nucleotide sequence ID" value="NC_009648.1"/>
</dbReference>
<dbReference type="SMR" id="A6TH65"/>
<dbReference type="STRING" id="272620.KPN_04545"/>
<dbReference type="jPOST" id="A6TH65"/>
<dbReference type="PaxDb" id="272620-KPN_04545"/>
<dbReference type="EnsemblBacteria" id="ABR79899">
    <property type="protein sequence ID" value="ABR79899"/>
    <property type="gene ID" value="KPN_04545"/>
</dbReference>
<dbReference type="GeneID" id="93275449"/>
<dbReference type="KEGG" id="kpn:KPN_04545"/>
<dbReference type="HOGENOM" id="CLU_074944_0_0_6"/>
<dbReference type="UniPathway" id="UPA00345"/>
<dbReference type="Proteomes" id="UP000000265">
    <property type="component" value="Chromosome"/>
</dbReference>
<dbReference type="GO" id="GO:0005829">
    <property type="term" value="C:cytosol"/>
    <property type="evidence" value="ECO:0007669"/>
    <property type="project" value="UniProtKB-ARBA"/>
</dbReference>
<dbReference type="GO" id="GO:0003746">
    <property type="term" value="F:translation elongation factor activity"/>
    <property type="evidence" value="ECO:0007669"/>
    <property type="project" value="UniProtKB-UniRule"/>
</dbReference>
<dbReference type="GO" id="GO:0043043">
    <property type="term" value="P:peptide biosynthetic process"/>
    <property type="evidence" value="ECO:0007669"/>
    <property type="project" value="InterPro"/>
</dbReference>
<dbReference type="CDD" id="cd04470">
    <property type="entry name" value="S1_EF-P_repeat_1"/>
    <property type="match status" value="1"/>
</dbReference>
<dbReference type="CDD" id="cd05794">
    <property type="entry name" value="S1_EF-P_repeat_2"/>
    <property type="match status" value="1"/>
</dbReference>
<dbReference type="FunFam" id="2.30.30.30:FF:000003">
    <property type="entry name" value="Elongation factor P"/>
    <property type="match status" value="1"/>
</dbReference>
<dbReference type="FunFam" id="2.40.50.140:FF:000004">
    <property type="entry name" value="Elongation factor P"/>
    <property type="match status" value="1"/>
</dbReference>
<dbReference type="FunFam" id="2.40.50.140:FF:000009">
    <property type="entry name" value="Elongation factor P"/>
    <property type="match status" value="1"/>
</dbReference>
<dbReference type="Gene3D" id="2.30.30.30">
    <property type="match status" value="1"/>
</dbReference>
<dbReference type="Gene3D" id="2.40.50.140">
    <property type="entry name" value="Nucleic acid-binding proteins"/>
    <property type="match status" value="2"/>
</dbReference>
<dbReference type="HAMAP" id="MF_00141">
    <property type="entry name" value="EF_P"/>
    <property type="match status" value="1"/>
</dbReference>
<dbReference type="InterPro" id="IPR015365">
    <property type="entry name" value="Elong-fact-P_C"/>
</dbReference>
<dbReference type="InterPro" id="IPR012340">
    <property type="entry name" value="NA-bd_OB-fold"/>
</dbReference>
<dbReference type="InterPro" id="IPR014722">
    <property type="entry name" value="Rib_uL2_dom2"/>
</dbReference>
<dbReference type="InterPro" id="IPR020599">
    <property type="entry name" value="Transl_elong_fac_P/YeiP"/>
</dbReference>
<dbReference type="InterPro" id="IPR013185">
    <property type="entry name" value="Transl_elong_KOW-like"/>
</dbReference>
<dbReference type="InterPro" id="IPR001059">
    <property type="entry name" value="Transl_elong_P/YeiP_cen"/>
</dbReference>
<dbReference type="InterPro" id="IPR013852">
    <property type="entry name" value="Transl_elong_P/YeiP_CS"/>
</dbReference>
<dbReference type="InterPro" id="IPR011768">
    <property type="entry name" value="Transl_elongation_fac_P"/>
</dbReference>
<dbReference type="InterPro" id="IPR008991">
    <property type="entry name" value="Translation_prot_SH3-like_sf"/>
</dbReference>
<dbReference type="NCBIfam" id="TIGR00038">
    <property type="entry name" value="efp"/>
    <property type="match status" value="1"/>
</dbReference>
<dbReference type="NCBIfam" id="NF001810">
    <property type="entry name" value="PRK00529.1"/>
    <property type="match status" value="1"/>
</dbReference>
<dbReference type="PANTHER" id="PTHR30053">
    <property type="entry name" value="ELONGATION FACTOR P"/>
    <property type="match status" value="1"/>
</dbReference>
<dbReference type="PANTHER" id="PTHR30053:SF12">
    <property type="entry name" value="ELONGATION FACTOR P (EF-P) FAMILY PROTEIN"/>
    <property type="match status" value="1"/>
</dbReference>
<dbReference type="Pfam" id="PF01132">
    <property type="entry name" value="EFP"/>
    <property type="match status" value="1"/>
</dbReference>
<dbReference type="Pfam" id="PF08207">
    <property type="entry name" value="EFP_N"/>
    <property type="match status" value="1"/>
</dbReference>
<dbReference type="Pfam" id="PF09285">
    <property type="entry name" value="Elong-fact-P_C"/>
    <property type="match status" value="1"/>
</dbReference>
<dbReference type="PIRSF" id="PIRSF005901">
    <property type="entry name" value="EF-P"/>
    <property type="match status" value="1"/>
</dbReference>
<dbReference type="SMART" id="SM01185">
    <property type="entry name" value="EFP"/>
    <property type="match status" value="1"/>
</dbReference>
<dbReference type="SMART" id="SM00841">
    <property type="entry name" value="Elong-fact-P_C"/>
    <property type="match status" value="1"/>
</dbReference>
<dbReference type="SUPFAM" id="SSF50249">
    <property type="entry name" value="Nucleic acid-binding proteins"/>
    <property type="match status" value="2"/>
</dbReference>
<dbReference type="SUPFAM" id="SSF50104">
    <property type="entry name" value="Translation proteins SH3-like domain"/>
    <property type="match status" value="1"/>
</dbReference>
<dbReference type="PROSITE" id="PS01275">
    <property type="entry name" value="EFP"/>
    <property type="match status" value="1"/>
</dbReference>
<keyword id="KW-0963">Cytoplasm</keyword>
<keyword id="KW-0251">Elongation factor</keyword>
<keyword id="KW-0379">Hydroxylation</keyword>
<keyword id="KW-0648">Protein biosynthesis</keyword>
<evidence type="ECO:0000255" key="1">
    <source>
        <dbReference type="HAMAP-Rule" id="MF_00141"/>
    </source>
</evidence>
<proteinExistence type="inferred from homology"/>
<organism>
    <name type="scientific">Klebsiella pneumoniae subsp. pneumoniae (strain ATCC 700721 / MGH 78578)</name>
    <dbReference type="NCBI Taxonomy" id="272620"/>
    <lineage>
        <taxon>Bacteria</taxon>
        <taxon>Pseudomonadati</taxon>
        <taxon>Pseudomonadota</taxon>
        <taxon>Gammaproteobacteria</taxon>
        <taxon>Enterobacterales</taxon>
        <taxon>Enterobacteriaceae</taxon>
        <taxon>Klebsiella/Raoultella group</taxon>
        <taxon>Klebsiella</taxon>
        <taxon>Klebsiella pneumoniae complex</taxon>
    </lineage>
</organism>
<protein>
    <recommendedName>
        <fullName evidence="1">Elongation factor P</fullName>
        <shortName evidence="1">EF-P</shortName>
    </recommendedName>
</protein>
<gene>
    <name evidence="1" type="primary">efp</name>
    <name type="ordered locus">KPN78578_44750</name>
    <name type="ORF">KPN_04545</name>
</gene>
<reference key="1">
    <citation type="submission" date="2006-09" db="EMBL/GenBank/DDBJ databases">
        <authorList>
            <consortium name="The Klebsiella pneumonia Genome Sequencing Project"/>
            <person name="McClelland M."/>
            <person name="Sanderson E.K."/>
            <person name="Spieth J."/>
            <person name="Clifton W.S."/>
            <person name="Latreille P."/>
            <person name="Sabo A."/>
            <person name="Pepin K."/>
            <person name="Bhonagiri V."/>
            <person name="Porwollik S."/>
            <person name="Ali J."/>
            <person name="Wilson R.K."/>
        </authorList>
    </citation>
    <scope>NUCLEOTIDE SEQUENCE [LARGE SCALE GENOMIC DNA]</scope>
    <source>
        <strain>ATCC 700721 / MGH 78578</strain>
    </source>
</reference>
<sequence length="188" mass="20603">MATYYSNDFRAGLKIMLDGEPYAVEASEFVKPGKGQAFARVKLRRLLTGTRVEKTFKSTDSAEGADVVDMNLTYLYNDGEFWHFMNNETFEQLSADAKAIGDNAKWLLDQAECIVTLWNGQPIAVTPPNFVELEIIETDPGLKGDTAGTGGKPATLSTGAVVKVPLFVQIGEVIKVDTRSGEYVSRVK</sequence>
<name>EFP_KLEP7</name>
<comment type="function">
    <text evidence="1">Involved in peptide bond synthesis. Alleviates ribosome stalling that occurs when 3 or more consecutive Pro residues or the sequence PPG is present in a protein, possibly by augmenting the peptidyl transferase activity of the ribosome. Modification of Lys-34 is required for alleviation.</text>
</comment>
<comment type="pathway">
    <text evidence="1">Protein biosynthesis; polypeptide chain elongation.</text>
</comment>
<comment type="subcellular location">
    <subcellularLocation>
        <location evidence="1">Cytoplasm</location>
    </subcellularLocation>
</comment>
<comment type="PTM">
    <text evidence="1">May be beta-lysylated on the epsilon-amino group of Lys-34 by the combined action of EpmA and EpmB, and then hydroxylated on the C5 position of the same residue by EpmC (if this protein is present). Lysylation is critical for the stimulatory effect of EF-P on peptide-bond formation. The lysylation moiety may extend toward the peptidyltransferase center and stabilize the terminal 3-CCA end of the tRNA. Hydroxylation of the C5 position on Lys-34 may allow additional potential stabilizing hydrogen-bond interactions with the P-tRNA.</text>
</comment>
<comment type="similarity">
    <text evidence="1">Belongs to the elongation factor P family.</text>
</comment>
<feature type="chain" id="PRO_1000010765" description="Elongation factor P">
    <location>
        <begin position="1"/>
        <end position="188"/>
    </location>
</feature>
<feature type="modified residue" description="N6-(3,6-diaminohexanoyl)-5-hydroxylysine" evidence="1">
    <location>
        <position position="34"/>
    </location>
</feature>